<dbReference type="EMBL" id="X04465">
    <property type="protein sequence ID" value="CAA28070.1"/>
    <property type="molecule type" value="Genomic_DNA"/>
</dbReference>
<dbReference type="PIR" id="S01582">
    <property type="entry name" value="A05012"/>
</dbReference>
<dbReference type="RefSeq" id="NP_039284.1">
    <property type="nucleotide sequence ID" value="NC_001319.1"/>
</dbReference>
<dbReference type="GeneID" id="2702587"/>
<dbReference type="GO" id="GO:0031969">
    <property type="term" value="C:chloroplast membrane"/>
    <property type="evidence" value="ECO:0007669"/>
    <property type="project" value="UniProtKB-SubCell"/>
</dbReference>
<protein>
    <recommendedName>
        <fullName>Uncharacterized 3.8 kDa protein in ycf12-psaM intergenic region</fullName>
    </recommendedName>
    <alternativeName>
        <fullName>ORF30</fullName>
    </alternativeName>
</protein>
<feature type="chain" id="PRO_0000359739" description="Uncharacterized 3.8 kDa protein in ycf12-psaM intergenic region">
    <location>
        <begin position="1"/>
        <end position="30"/>
    </location>
</feature>
<feature type="transmembrane region" description="Helical" evidence="1">
    <location>
        <begin position="9"/>
        <end position="26"/>
    </location>
</feature>
<evidence type="ECO:0000255" key="1"/>
<evidence type="ECO:0000305" key="2"/>
<name>YCX3_MARPO</name>
<accession>Q32617</accession>
<reference key="1">
    <citation type="journal article" date="1986" name="Nature">
        <title>Chloroplast gene organization deduced from complete sequence of liverwort Marchantia polymorpha chloroplast DNA.</title>
        <authorList>
            <person name="Ohyama K."/>
            <person name="Fukuzawa H."/>
            <person name="Kohchi T."/>
            <person name="Shirai H."/>
            <person name="Sano T."/>
            <person name="Sano S."/>
            <person name="Umesono K."/>
            <person name="Shiki Y."/>
            <person name="Takeuchi M."/>
            <person name="Chang Z."/>
            <person name="Aota S."/>
            <person name="Inokuchi H."/>
            <person name="Ozeki H."/>
        </authorList>
    </citation>
    <scope>NUCLEOTIDE SEQUENCE [LARGE SCALE GENOMIC DNA]</scope>
</reference>
<organism>
    <name type="scientific">Marchantia polymorpha</name>
    <name type="common">Common liverwort</name>
    <name type="synonym">Marchantia aquatica</name>
    <dbReference type="NCBI Taxonomy" id="3197"/>
    <lineage>
        <taxon>Eukaryota</taxon>
        <taxon>Viridiplantae</taxon>
        <taxon>Streptophyta</taxon>
        <taxon>Embryophyta</taxon>
        <taxon>Marchantiophyta</taxon>
        <taxon>Marchantiopsida</taxon>
        <taxon>Marchantiidae</taxon>
        <taxon>Marchantiales</taxon>
        <taxon>Marchantiaceae</taxon>
        <taxon>Marchantia</taxon>
    </lineage>
</organism>
<comment type="subcellular location">
    <subcellularLocation>
        <location evidence="2">Plastid</location>
        <location evidence="2">Chloroplast membrane</location>
        <topology evidence="2">Single-pass membrane protein</topology>
    </subcellularLocation>
</comment>
<geneLocation type="chloroplast"/>
<keyword id="KW-0150">Chloroplast</keyword>
<keyword id="KW-0472">Membrane</keyword>
<keyword id="KW-0934">Plastid</keyword>
<keyword id="KW-0812">Transmembrane</keyword>
<keyword id="KW-1133">Transmembrane helix</keyword>
<sequence>MELILNKEYRLVIIVLISVYYRYRFFLLLF</sequence>
<proteinExistence type="predicted"/>